<dbReference type="EC" id="2.7.4.3" evidence="1"/>
<dbReference type="EMBL" id="CP000469">
    <property type="protein sequence ID" value="ABK48670.1"/>
    <property type="molecule type" value="Genomic_DNA"/>
</dbReference>
<dbReference type="RefSeq" id="WP_011623010.1">
    <property type="nucleotide sequence ID" value="NC_008577.1"/>
</dbReference>
<dbReference type="SMR" id="A0KY01"/>
<dbReference type="STRING" id="94122.Shewana3_2441"/>
<dbReference type="KEGG" id="shn:Shewana3_2441"/>
<dbReference type="eggNOG" id="COG0563">
    <property type="taxonomic scope" value="Bacteria"/>
</dbReference>
<dbReference type="HOGENOM" id="CLU_032354_1_2_6"/>
<dbReference type="OrthoDB" id="9805030at2"/>
<dbReference type="UniPathway" id="UPA00588">
    <property type="reaction ID" value="UER00649"/>
</dbReference>
<dbReference type="Proteomes" id="UP000002589">
    <property type="component" value="Chromosome"/>
</dbReference>
<dbReference type="GO" id="GO:0005737">
    <property type="term" value="C:cytoplasm"/>
    <property type="evidence" value="ECO:0007669"/>
    <property type="project" value="UniProtKB-SubCell"/>
</dbReference>
<dbReference type="GO" id="GO:0004017">
    <property type="term" value="F:adenylate kinase activity"/>
    <property type="evidence" value="ECO:0007669"/>
    <property type="project" value="UniProtKB-UniRule"/>
</dbReference>
<dbReference type="GO" id="GO:0005524">
    <property type="term" value="F:ATP binding"/>
    <property type="evidence" value="ECO:0007669"/>
    <property type="project" value="UniProtKB-UniRule"/>
</dbReference>
<dbReference type="GO" id="GO:0044209">
    <property type="term" value="P:AMP salvage"/>
    <property type="evidence" value="ECO:0007669"/>
    <property type="project" value="UniProtKB-UniRule"/>
</dbReference>
<dbReference type="CDD" id="cd01428">
    <property type="entry name" value="ADK"/>
    <property type="match status" value="1"/>
</dbReference>
<dbReference type="FunFam" id="3.40.50.300:FF:000106">
    <property type="entry name" value="Adenylate kinase mitochondrial"/>
    <property type="match status" value="1"/>
</dbReference>
<dbReference type="Gene3D" id="3.40.50.300">
    <property type="entry name" value="P-loop containing nucleotide triphosphate hydrolases"/>
    <property type="match status" value="1"/>
</dbReference>
<dbReference type="HAMAP" id="MF_00235">
    <property type="entry name" value="Adenylate_kinase_Adk"/>
    <property type="match status" value="1"/>
</dbReference>
<dbReference type="InterPro" id="IPR006259">
    <property type="entry name" value="Adenyl_kin_sub"/>
</dbReference>
<dbReference type="InterPro" id="IPR000850">
    <property type="entry name" value="Adenylat/UMP-CMP_kin"/>
</dbReference>
<dbReference type="InterPro" id="IPR033690">
    <property type="entry name" value="Adenylat_kinase_CS"/>
</dbReference>
<dbReference type="InterPro" id="IPR007862">
    <property type="entry name" value="Adenylate_kinase_lid-dom"/>
</dbReference>
<dbReference type="InterPro" id="IPR027417">
    <property type="entry name" value="P-loop_NTPase"/>
</dbReference>
<dbReference type="NCBIfam" id="TIGR01351">
    <property type="entry name" value="adk"/>
    <property type="match status" value="1"/>
</dbReference>
<dbReference type="NCBIfam" id="NF001379">
    <property type="entry name" value="PRK00279.1-1"/>
    <property type="match status" value="1"/>
</dbReference>
<dbReference type="NCBIfam" id="NF001380">
    <property type="entry name" value="PRK00279.1-2"/>
    <property type="match status" value="1"/>
</dbReference>
<dbReference type="NCBIfam" id="NF001381">
    <property type="entry name" value="PRK00279.1-3"/>
    <property type="match status" value="1"/>
</dbReference>
<dbReference type="NCBIfam" id="NF011100">
    <property type="entry name" value="PRK14527.1"/>
    <property type="match status" value="1"/>
</dbReference>
<dbReference type="PANTHER" id="PTHR23359">
    <property type="entry name" value="NUCLEOTIDE KINASE"/>
    <property type="match status" value="1"/>
</dbReference>
<dbReference type="Pfam" id="PF00406">
    <property type="entry name" value="ADK"/>
    <property type="match status" value="1"/>
</dbReference>
<dbReference type="Pfam" id="PF05191">
    <property type="entry name" value="ADK_lid"/>
    <property type="match status" value="1"/>
</dbReference>
<dbReference type="PRINTS" id="PR00094">
    <property type="entry name" value="ADENYLTKNASE"/>
</dbReference>
<dbReference type="SUPFAM" id="SSF52540">
    <property type="entry name" value="P-loop containing nucleoside triphosphate hydrolases"/>
    <property type="match status" value="1"/>
</dbReference>
<dbReference type="PROSITE" id="PS00113">
    <property type="entry name" value="ADENYLATE_KINASE"/>
    <property type="match status" value="1"/>
</dbReference>
<organism>
    <name type="scientific">Shewanella sp. (strain ANA-3)</name>
    <dbReference type="NCBI Taxonomy" id="94122"/>
    <lineage>
        <taxon>Bacteria</taxon>
        <taxon>Pseudomonadati</taxon>
        <taxon>Pseudomonadota</taxon>
        <taxon>Gammaproteobacteria</taxon>
        <taxon>Alteromonadales</taxon>
        <taxon>Shewanellaceae</taxon>
        <taxon>Shewanella</taxon>
    </lineage>
</organism>
<protein>
    <recommendedName>
        <fullName evidence="1">Adenylate kinase</fullName>
        <shortName evidence="1">AK</shortName>
        <ecNumber evidence="1">2.7.4.3</ecNumber>
    </recommendedName>
    <alternativeName>
        <fullName evidence="1">ATP-AMP transphosphorylase</fullName>
    </alternativeName>
    <alternativeName>
        <fullName evidence="1">ATP:AMP phosphotransferase</fullName>
    </alternativeName>
    <alternativeName>
        <fullName evidence="1">Adenylate monophosphate kinase</fullName>
    </alternativeName>
</protein>
<keyword id="KW-0067">ATP-binding</keyword>
<keyword id="KW-0963">Cytoplasm</keyword>
<keyword id="KW-0418">Kinase</keyword>
<keyword id="KW-0545">Nucleotide biosynthesis</keyword>
<keyword id="KW-0547">Nucleotide-binding</keyword>
<keyword id="KW-0808">Transferase</keyword>
<proteinExistence type="inferred from homology"/>
<evidence type="ECO:0000255" key="1">
    <source>
        <dbReference type="HAMAP-Rule" id="MF_00235"/>
    </source>
</evidence>
<feature type="chain" id="PRO_1000058900" description="Adenylate kinase">
    <location>
        <begin position="1"/>
        <end position="214"/>
    </location>
</feature>
<feature type="region of interest" description="NMP" evidence="1">
    <location>
        <begin position="30"/>
        <end position="59"/>
    </location>
</feature>
<feature type="region of interest" description="LID" evidence="1">
    <location>
        <begin position="122"/>
        <end position="159"/>
    </location>
</feature>
<feature type="binding site" evidence="1">
    <location>
        <begin position="10"/>
        <end position="15"/>
    </location>
    <ligand>
        <name>ATP</name>
        <dbReference type="ChEBI" id="CHEBI:30616"/>
    </ligand>
</feature>
<feature type="binding site" evidence="1">
    <location>
        <position position="31"/>
    </location>
    <ligand>
        <name>AMP</name>
        <dbReference type="ChEBI" id="CHEBI:456215"/>
    </ligand>
</feature>
<feature type="binding site" evidence="1">
    <location>
        <position position="36"/>
    </location>
    <ligand>
        <name>AMP</name>
        <dbReference type="ChEBI" id="CHEBI:456215"/>
    </ligand>
</feature>
<feature type="binding site" evidence="1">
    <location>
        <begin position="57"/>
        <end position="59"/>
    </location>
    <ligand>
        <name>AMP</name>
        <dbReference type="ChEBI" id="CHEBI:456215"/>
    </ligand>
</feature>
<feature type="binding site" evidence="1">
    <location>
        <begin position="85"/>
        <end position="88"/>
    </location>
    <ligand>
        <name>AMP</name>
        <dbReference type="ChEBI" id="CHEBI:456215"/>
    </ligand>
</feature>
<feature type="binding site" evidence="1">
    <location>
        <position position="92"/>
    </location>
    <ligand>
        <name>AMP</name>
        <dbReference type="ChEBI" id="CHEBI:456215"/>
    </ligand>
</feature>
<feature type="binding site" evidence="1">
    <location>
        <position position="123"/>
    </location>
    <ligand>
        <name>ATP</name>
        <dbReference type="ChEBI" id="CHEBI:30616"/>
    </ligand>
</feature>
<feature type="binding site" evidence="1">
    <location>
        <begin position="132"/>
        <end position="133"/>
    </location>
    <ligand>
        <name>ATP</name>
        <dbReference type="ChEBI" id="CHEBI:30616"/>
    </ligand>
</feature>
<feature type="binding site" evidence="1">
    <location>
        <position position="156"/>
    </location>
    <ligand>
        <name>AMP</name>
        <dbReference type="ChEBI" id="CHEBI:456215"/>
    </ligand>
</feature>
<feature type="binding site" evidence="1">
    <location>
        <position position="167"/>
    </location>
    <ligand>
        <name>AMP</name>
        <dbReference type="ChEBI" id="CHEBI:456215"/>
    </ligand>
</feature>
<feature type="binding site" evidence="1">
    <location>
        <position position="200"/>
    </location>
    <ligand>
        <name>ATP</name>
        <dbReference type="ChEBI" id="CHEBI:30616"/>
    </ligand>
</feature>
<name>KAD_SHESA</name>
<comment type="function">
    <text evidence="1">Catalyzes the reversible transfer of the terminal phosphate group between ATP and AMP. Plays an important role in cellular energy homeostasis and in adenine nucleotide metabolism.</text>
</comment>
<comment type="catalytic activity">
    <reaction evidence="1">
        <text>AMP + ATP = 2 ADP</text>
        <dbReference type="Rhea" id="RHEA:12973"/>
        <dbReference type="ChEBI" id="CHEBI:30616"/>
        <dbReference type="ChEBI" id="CHEBI:456215"/>
        <dbReference type="ChEBI" id="CHEBI:456216"/>
        <dbReference type="EC" id="2.7.4.3"/>
    </reaction>
</comment>
<comment type="pathway">
    <text evidence="1">Purine metabolism; AMP biosynthesis via salvage pathway; AMP from ADP: step 1/1.</text>
</comment>
<comment type="subunit">
    <text evidence="1">Monomer.</text>
</comment>
<comment type="subcellular location">
    <subcellularLocation>
        <location evidence="1">Cytoplasm</location>
    </subcellularLocation>
</comment>
<comment type="domain">
    <text evidence="1">Consists of three domains, a large central CORE domain and two small peripheral domains, NMPbind and LID, which undergo movements during catalysis. The LID domain closes over the site of phosphoryl transfer upon ATP binding. Assembling and dissambling the active center during each catalytic cycle provides an effective means to prevent ATP hydrolysis.</text>
</comment>
<comment type="similarity">
    <text evidence="1">Belongs to the adenylate kinase family.</text>
</comment>
<accession>A0KY01</accession>
<gene>
    <name evidence="1" type="primary">adk</name>
    <name type="ordered locus">Shewana3_2441</name>
</gene>
<reference key="1">
    <citation type="submission" date="2006-09" db="EMBL/GenBank/DDBJ databases">
        <title>Complete sequence of chromosome 1 of Shewanella sp. ANA-3.</title>
        <authorList>
            <person name="Copeland A."/>
            <person name="Lucas S."/>
            <person name="Lapidus A."/>
            <person name="Barry K."/>
            <person name="Detter J.C."/>
            <person name="Glavina del Rio T."/>
            <person name="Hammon N."/>
            <person name="Israni S."/>
            <person name="Dalin E."/>
            <person name="Tice H."/>
            <person name="Pitluck S."/>
            <person name="Chertkov O."/>
            <person name="Brettin T."/>
            <person name="Bruce D."/>
            <person name="Han C."/>
            <person name="Tapia R."/>
            <person name="Gilna P."/>
            <person name="Schmutz J."/>
            <person name="Larimer F."/>
            <person name="Land M."/>
            <person name="Hauser L."/>
            <person name="Kyrpides N."/>
            <person name="Kim E."/>
            <person name="Newman D."/>
            <person name="Salticov C."/>
            <person name="Konstantinidis K."/>
            <person name="Klappenback J."/>
            <person name="Tiedje J."/>
            <person name="Richardson P."/>
        </authorList>
    </citation>
    <scope>NUCLEOTIDE SEQUENCE [LARGE SCALE GENOMIC DNA]</scope>
    <source>
        <strain>ANA-3</strain>
    </source>
</reference>
<sequence>MRIILLGAPGAGKGTQAQFIMEQYGIPQISTGDMLRAAVKAGTPLGLEAKKVMDAGQLVSDDLIIGLVKERIAQDDCVKGFLLDGFPRTIPQADAMAANGISIDHVIEIDVPDEEIVKRMSGRRVHPGSGRVYHVVFNPPKVEGKDDVTGEDLAIRPDDEEATVRKRLGIYHEQTKPLVEYYGKVAAAGNTQYHKFDGTQSVAAVSAQLASVLK</sequence>